<proteinExistence type="evidence at protein level"/>
<feature type="chain" id="PRO_0000217825" description="Photosystem I assembly protein Ycf3">
    <location>
        <begin position="1"/>
        <end position="168"/>
    </location>
</feature>
<feature type="repeat" description="TPR 1">
    <location>
        <begin position="35"/>
        <end position="68"/>
    </location>
</feature>
<feature type="repeat" description="TPR 2">
    <location>
        <begin position="72"/>
        <end position="105"/>
    </location>
</feature>
<feature type="repeat" description="TPR 3">
    <location>
        <begin position="120"/>
        <end position="153"/>
    </location>
</feature>
<accession>P12204</accession>
<gene>
    <name evidence="1" type="primary">ycf3</name>
</gene>
<keyword id="KW-0150">Chloroplast</keyword>
<keyword id="KW-0472">Membrane</keyword>
<keyword id="KW-0602">Photosynthesis</keyword>
<keyword id="KW-0934">Plastid</keyword>
<keyword id="KW-1185">Reference proteome</keyword>
<keyword id="KW-0677">Repeat</keyword>
<keyword id="KW-0793">Thylakoid</keyword>
<keyword id="KW-0802">TPR repeat</keyword>
<comment type="function">
    <text evidence="1 3">Essential for the assembly of the photosystem I (PSI) complex. May act as a chaperone-like factor to guide the assembly of the PSI subunits.</text>
</comment>
<comment type="subunit">
    <text evidence="2">Interacts with Y3IP1.</text>
</comment>
<comment type="subcellular location">
    <subcellularLocation>
        <location evidence="1">Plastid</location>
        <location evidence="1">Chloroplast thylakoid membrane</location>
        <topology evidence="1">Peripheral membrane protein</topology>
    </subcellularLocation>
</comment>
<comment type="disruption phenotype">
    <text evidence="3">Non-photosynthetic phenotype due to the absence of photosystem I (PSI). Can grow only in vitro on sterile sucrose-containing medium. Under normal light conditions, mutant plants show severe pigment deficiency and leaf bleaching due to the accumulation of photooxidative damage. Under low light conditions, mutant plants show a light-green phenotype, very slow growth and delayed development.</text>
</comment>
<comment type="similarity">
    <text evidence="1">Belongs to the Ycf3 family.</text>
</comment>
<dbReference type="EMBL" id="Z00044">
    <property type="protein sequence ID" value="CAA77415.1"/>
    <property type="molecule type" value="Genomic_DNA"/>
</dbReference>
<dbReference type="PIR" id="A05191">
    <property type="entry name" value="A05191"/>
</dbReference>
<dbReference type="RefSeq" id="NP_054498.1">
    <property type="nucleotide sequence ID" value="NC_001879.2"/>
</dbReference>
<dbReference type="SMR" id="P12204"/>
<dbReference type="GeneID" id="800437"/>
<dbReference type="KEGG" id="nta:800437"/>
<dbReference type="OMA" id="VYYRDGM"/>
<dbReference type="OrthoDB" id="431027at2759"/>
<dbReference type="Proteomes" id="UP000084051">
    <property type="component" value="Unplaced"/>
</dbReference>
<dbReference type="GO" id="GO:0009535">
    <property type="term" value="C:chloroplast thylakoid membrane"/>
    <property type="evidence" value="ECO:0007669"/>
    <property type="project" value="UniProtKB-SubCell"/>
</dbReference>
<dbReference type="GO" id="GO:0048564">
    <property type="term" value="P:photosystem I assembly"/>
    <property type="evidence" value="ECO:0000315"/>
    <property type="project" value="UniProtKB"/>
</dbReference>
<dbReference type="FunFam" id="1.25.40.10:FF:000004">
    <property type="entry name" value="Photosystem I assembly protein Ycf3"/>
    <property type="match status" value="1"/>
</dbReference>
<dbReference type="Gene3D" id="1.25.40.10">
    <property type="entry name" value="Tetratricopeptide repeat domain"/>
    <property type="match status" value="1"/>
</dbReference>
<dbReference type="HAMAP" id="MF_00439">
    <property type="entry name" value="Ycf3"/>
    <property type="match status" value="1"/>
</dbReference>
<dbReference type="InterPro" id="IPR022818">
    <property type="entry name" value="PSI_Ycf3_assembly"/>
</dbReference>
<dbReference type="InterPro" id="IPR011990">
    <property type="entry name" value="TPR-like_helical_dom_sf"/>
</dbReference>
<dbReference type="InterPro" id="IPR019734">
    <property type="entry name" value="TPR_rpt"/>
</dbReference>
<dbReference type="InterPro" id="IPR051685">
    <property type="entry name" value="Ycf3/AcsC/BcsC/TPR_MFPF"/>
</dbReference>
<dbReference type="NCBIfam" id="NF002725">
    <property type="entry name" value="PRK02603.1"/>
    <property type="match status" value="1"/>
</dbReference>
<dbReference type="PANTHER" id="PTHR44943">
    <property type="entry name" value="CELLULOSE SYNTHASE OPERON PROTEIN C"/>
    <property type="match status" value="1"/>
</dbReference>
<dbReference type="PANTHER" id="PTHR44943:SF8">
    <property type="entry name" value="TPR REPEAT-CONTAINING PROTEIN MJ0263"/>
    <property type="match status" value="1"/>
</dbReference>
<dbReference type="Pfam" id="PF00515">
    <property type="entry name" value="TPR_1"/>
    <property type="match status" value="1"/>
</dbReference>
<dbReference type="SMART" id="SM00028">
    <property type="entry name" value="TPR"/>
    <property type="match status" value="3"/>
</dbReference>
<dbReference type="SUPFAM" id="SSF48452">
    <property type="entry name" value="TPR-like"/>
    <property type="match status" value="1"/>
</dbReference>
<dbReference type="PROSITE" id="PS50005">
    <property type="entry name" value="TPR"/>
    <property type="match status" value="3"/>
</dbReference>
<dbReference type="PROSITE" id="PS50293">
    <property type="entry name" value="TPR_REGION"/>
    <property type="match status" value="2"/>
</dbReference>
<evidence type="ECO:0000255" key="1">
    <source>
        <dbReference type="HAMAP-Rule" id="MF_00439"/>
    </source>
</evidence>
<evidence type="ECO:0000269" key="2">
    <source>
    </source>
</evidence>
<evidence type="ECO:0000269" key="3">
    <source>
    </source>
</evidence>
<protein>
    <recommendedName>
        <fullName evidence="1">Photosystem I assembly protein Ycf3</fullName>
    </recommendedName>
</protein>
<organism>
    <name type="scientific">Nicotiana tabacum</name>
    <name type="common">Common tobacco</name>
    <dbReference type="NCBI Taxonomy" id="4097"/>
    <lineage>
        <taxon>Eukaryota</taxon>
        <taxon>Viridiplantae</taxon>
        <taxon>Streptophyta</taxon>
        <taxon>Embryophyta</taxon>
        <taxon>Tracheophyta</taxon>
        <taxon>Spermatophyta</taxon>
        <taxon>Magnoliopsida</taxon>
        <taxon>eudicotyledons</taxon>
        <taxon>Gunneridae</taxon>
        <taxon>Pentapetalae</taxon>
        <taxon>asterids</taxon>
        <taxon>lamiids</taxon>
        <taxon>Solanales</taxon>
        <taxon>Solanaceae</taxon>
        <taxon>Nicotianoideae</taxon>
        <taxon>Nicotianeae</taxon>
        <taxon>Nicotiana</taxon>
    </lineage>
</organism>
<reference key="1">
    <citation type="journal article" date="1986" name="EMBO J.">
        <title>The complete nucleotide sequence of the tobacco chloroplast genome: its gene organization and expression.</title>
        <authorList>
            <person name="Shinozaki K."/>
            <person name="Ohme M."/>
            <person name="Tanaka M."/>
            <person name="Wakasugi T."/>
            <person name="Hayashida N."/>
            <person name="Matsubayashi T."/>
            <person name="Zaita N."/>
            <person name="Chunwongse J."/>
            <person name="Obokata J."/>
            <person name="Yamaguchi-Shinozaki K."/>
            <person name="Ohto C."/>
            <person name="Torazawa K."/>
            <person name="Meng B.-Y."/>
            <person name="Sugita M."/>
            <person name="Deno H."/>
            <person name="Kamogashira T."/>
            <person name="Yamada K."/>
            <person name="Kusuda J."/>
            <person name="Takaiwa F."/>
            <person name="Kato A."/>
            <person name="Tohdoh N."/>
            <person name="Shimada H."/>
            <person name="Sugiura M."/>
        </authorList>
    </citation>
    <scope>NUCLEOTIDE SEQUENCE [LARGE SCALE GENOMIC DNA]</scope>
    <source>
        <strain>cv. Bright Yellow 4</strain>
    </source>
</reference>
<reference key="2">
    <citation type="journal article" date="1997" name="J. Cell Biol.">
        <title>Targeted inactivation of a tobacco intron-containing open reading frame reveals a novel chloroplast-encoded photosystem I-related gene.</title>
        <authorList>
            <person name="Ruf S."/>
            <person name="Koessel H."/>
            <person name="Bock R."/>
        </authorList>
    </citation>
    <scope>FUNCTION</scope>
    <scope>DISRUPTION PHENOTYPE</scope>
</reference>
<reference key="3">
    <citation type="journal article" date="2010" name="Plant Cell">
        <title>Y3IP1, a nucleus-encoded thylakoid protein, cooperates with the plastid-encoded Ycf3 protein in photosystem I assembly of tobacco and Arabidopsis.</title>
        <authorList>
            <person name="Albus C.A."/>
            <person name="Ruf S."/>
            <person name="Schottler M.A."/>
            <person name="Lein W."/>
            <person name="Kehr J."/>
            <person name="Bock R."/>
        </authorList>
    </citation>
    <scope>INTERACTION WITH Y3IP1</scope>
</reference>
<name>YCF3_TOBAC</name>
<sequence length="168" mass="19553">MPRSRINGNFIDKTFSIVANILLRVIPTTSGEKEAFTYYRDGMSAQSEGNYAEALQNYYEAMRLEIDPYDRSYILYNIGLIHTSNGEHTKALEYYFRALERNPFLPQAFNNMAVICHYRGEQAIQQGDSEIAEAWFDQAAEYWKQAIALTPGNYIEAHNWLKITRRFE</sequence>
<geneLocation type="chloroplast"/>